<keyword id="KW-0007">Acetylation</keyword>
<keyword id="KW-0378">Hydrolase</keyword>
<keyword id="KW-0511">Multifunctional enzyme</keyword>
<keyword id="KW-0658">Purine biosynthesis</keyword>
<keyword id="KW-1185">Reference proteome</keyword>
<keyword id="KW-0808">Transferase</keyword>
<organism>
    <name type="scientific">Shigella sonnei (strain Ss046)</name>
    <dbReference type="NCBI Taxonomy" id="300269"/>
    <lineage>
        <taxon>Bacteria</taxon>
        <taxon>Pseudomonadati</taxon>
        <taxon>Pseudomonadota</taxon>
        <taxon>Gammaproteobacteria</taxon>
        <taxon>Enterobacterales</taxon>
        <taxon>Enterobacteriaceae</taxon>
        <taxon>Shigella</taxon>
    </lineage>
</organism>
<sequence length="529" mass="57358">MQQRRPVRRALLSVSDKAGIVEFAQALSARGVELLSTGGTARLLAEKGLPVTEVSDYTGFPEMMDGRVKTLHPKVHGGILGRRGQDDAIMEEHQIQPIDMVVVNLYPFAQTVAREGCSLEDAVENIDIGGPTMVRSAAKNHKDVAIVVKSSDYDAIIKEMDDNEGSLTLATRFDLAIKAFEHTAAYDSMIANYFGSMVPAYHGESKEAAGRFPRTLNLNFIKKQDMRYGENSHQQAAFYIEENVKEASVATATQVQGKALSYNNIADTDAALECVKEFAEPACVIVKHANPCGVAIGNSILDAYDRAYKTDPTSAFGGIIAFNRELDAETAQAIISRQFVEVIIAPSASEEALKITAAKQNVRVLTCGQWGERVPGLDFKRVNGGLLVQDRDLGMVGAEELRVVTQRQPTEQELRDALFCWKVAKFVKSNAIVYAKNNMTIGIGAGQMSRVYSAKIAGIKAADEGLEVKGSSMASDAFFPFRDGIDAAAAAGVTCVIQPGGSIRDDEVIAAADEHGIAMLFTDMRHFRH</sequence>
<proteinExistence type="inferred from homology"/>
<evidence type="ECO:0000255" key="1">
    <source>
        <dbReference type="HAMAP-Rule" id="MF_00139"/>
    </source>
</evidence>
<evidence type="ECO:0000255" key="2">
    <source>
        <dbReference type="PROSITE-ProRule" id="PRU01202"/>
    </source>
</evidence>
<comment type="catalytic activity">
    <reaction evidence="1">
        <text>(6R)-10-formyltetrahydrofolate + 5-amino-1-(5-phospho-beta-D-ribosyl)imidazole-4-carboxamide = 5-formamido-1-(5-phospho-D-ribosyl)imidazole-4-carboxamide + (6S)-5,6,7,8-tetrahydrofolate</text>
        <dbReference type="Rhea" id="RHEA:22192"/>
        <dbReference type="ChEBI" id="CHEBI:57453"/>
        <dbReference type="ChEBI" id="CHEBI:58467"/>
        <dbReference type="ChEBI" id="CHEBI:58475"/>
        <dbReference type="ChEBI" id="CHEBI:195366"/>
        <dbReference type="EC" id="2.1.2.3"/>
    </reaction>
</comment>
<comment type="catalytic activity">
    <reaction evidence="1">
        <text>IMP + H2O = 5-formamido-1-(5-phospho-D-ribosyl)imidazole-4-carboxamide</text>
        <dbReference type="Rhea" id="RHEA:18445"/>
        <dbReference type="ChEBI" id="CHEBI:15377"/>
        <dbReference type="ChEBI" id="CHEBI:58053"/>
        <dbReference type="ChEBI" id="CHEBI:58467"/>
        <dbReference type="EC" id="3.5.4.10"/>
    </reaction>
</comment>
<comment type="pathway">
    <text evidence="1">Purine metabolism; IMP biosynthesis via de novo pathway; 5-formamido-1-(5-phospho-D-ribosyl)imidazole-4-carboxamide from 5-amino-1-(5-phospho-D-ribosyl)imidazole-4-carboxamide (10-formyl THF route): step 1/1.</text>
</comment>
<comment type="pathway">
    <text evidence="1">Purine metabolism; IMP biosynthesis via de novo pathway; IMP from 5-formamido-1-(5-phospho-D-ribosyl)imidazole-4-carboxamide: step 1/1.</text>
</comment>
<comment type="domain">
    <text evidence="1">The IMP cyclohydrolase activity resides in the N-terminal region.</text>
</comment>
<comment type="similarity">
    <text evidence="1">Belongs to the PurH family.</text>
</comment>
<accession>Q3YUX8</accession>
<reference key="1">
    <citation type="journal article" date="2005" name="Nucleic Acids Res.">
        <title>Genome dynamics and diversity of Shigella species, the etiologic agents of bacillary dysentery.</title>
        <authorList>
            <person name="Yang F."/>
            <person name="Yang J."/>
            <person name="Zhang X."/>
            <person name="Chen L."/>
            <person name="Jiang Y."/>
            <person name="Yan Y."/>
            <person name="Tang X."/>
            <person name="Wang J."/>
            <person name="Xiong Z."/>
            <person name="Dong J."/>
            <person name="Xue Y."/>
            <person name="Zhu Y."/>
            <person name="Xu X."/>
            <person name="Sun L."/>
            <person name="Chen S."/>
            <person name="Nie H."/>
            <person name="Peng J."/>
            <person name="Xu J."/>
            <person name="Wang Y."/>
            <person name="Yuan Z."/>
            <person name="Wen Y."/>
            <person name="Yao Z."/>
            <person name="Shen Y."/>
            <person name="Qiang B."/>
            <person name="Hou Y."/>
            <person name="Yu J."/>
            <person name="Jin Q."/>
        </authorList>
    </citation>
    <scope>NUCLEOTIDE SEQUENCE [LARGE SCALE GENOMIC DNA]</scope>
    <source>
        <strain>Ss046</strain>
    </source>
</reference>
<feature type="chain" id="PRO_1000018958" description="Bifunctional purine biosynthesis protein PurH">
    <location>
        <begin position="1"/>
        <end position="529"/>
    </location>
</feature>
<feature type="domain" description="MGS-like" evidence="2">
    <location>
        <begin position="1"/>
        <end position="148"/>
    </location>
</feature>
<feature type="modified residue" description="N6-acetyllysine" evidence="1">
    <location>
        <position position="287"/>
    </location>
</feature>
<protein>
    <recommendedName>
        <fullName evidence="1">Bifunctional purine biosynthesis protein PurH</fullName>
    </recommendedName>
    <domain>
        <recommendedName>
            <fullName evidence="1">Phosphoribosylaminoimidazolecarboxamide formyltransferase</fullName>
            <ecNumber evidence="1">2.1.2.3</ecNumber>
        </recommendedName>
        <alternativeName>
            <fullName evidence="1">AICAR transformylase</fullName>
        </alternativeName>
    </domain>
    <domain>
        <recommendedName>
            <fullName evidence="1">IMP cyclohydrolase</fullName>
            <ecNumber evidence="1">3.5.4.10</ecNumber>
        </recommendedName>
        <alternativeName>
            <fullName evidence="1">ATIC</fullName>
        </alternativeName>
        <alternativeName>
            <fullName evidence="1">IMP synthase</fullName>
        </alternativeName>
        <alternativeName>
            <fullName evidence="1">Inosinicase</fullName>
        </alternativeName>
    </domain>
</protein>
<gene>
    <name evidence="1" type="primary">purH</name>
    <name type="ordered locus">SSON_4179</name>
</gene>
<dbReference type="EC" id="2.1.2.3" evidence="1"/>
<dbReference type="EC" id="3.5.4.10" evidence="1"/>
<dbReference type="EMBL" id="CP000038">
    <property type="protein sequence ID" value="AAZ90684.1"/>
    <property type="molecule type" value="Genomic_DNA"/>
</dbReference>
<dbReference type="RefSeq" id="WP_001187566.1">
    <property type="nucleotide sequence ID" value="NC_007384.1"/>
</dbReference>
<dbReference type="SMR" id="Q3YUX8"/>
<dbReference type="KEGG" id="ssn:SSON_4179"/>
<dbReference type="HOGENOM" id="CLU_016316_5_2_6"/>
<dbReference type="UniPathway" id="UPA00074">
    <property type="reaction ID" value="UER00133"/>
</dbReference>
<dbReference type="UniPathway" id="UPA00074">
    <property type="reaction ID" value="UER00135"/>
</dbReference>
<dbReference type="Proteomes" id="UP000002529">
    <property type="component" value="Chromosome"/>
</dbReference>
<dbReference type="GO" id="GO:0005829">
    <property type="term" value="C:cytosol"/>
    <property type="evidence" value="ECO:0007669"/>
    <property type="project" value="TreeGrafter"/>
</dbReference>
<dbReference type="GO" id="GO:0003937">
    <property type="term" value="F:IMP cyclohydrolase activity"/>
    <property type="evidence" value="ECO:0007669"/>
    <property type="project" value="UniProtKB-UniRule"/>
</dbReference>
<dbReference type="GO" id="GO:0004643">
    <property type="term" value="F:phosphoribosylaminoimidazolecarboxamide formyltransferase activity"/>
    <property type="evidence" value="ECO:0007669"/>
    <property type="project" value="UniProtKB-UniRule"/>
</dbReference>
<dbReference type="GO" id="GO:0006189">
    <property type="term" value="P:'de novo' IMP biosynthetic process"/>
    <property type="evidence" value="ECO:0007669"/>
    <property type="project" value="UniProtKB-UniRule"/>
</dbReference>
<dbReference type="CDD" id="cd01421">
    <property type="entry name" value="IMPCH"/>
    <property type="match status" value="1"/>
</dbReference>
<dbReference type="FunFam" id="3.40.140.20:FF:000001">
    <property type="entry name" value="Bifunctional purine biosynthesis protein PurH"/>
    <property type="match status" value="1"/>
</dbReference>
<dbReference type="FunFam" id="3.40.140.20:FF:000002">
    <property type="entry name" value="Bifunctional purine biosynthesis protein PurH"/>
    <property type="match status" value="1"/>
</dbReference>
<dbReference type="FunFam" id="3.40.50.1380:FF:000001">
    <property type="entry name" value="Bifunctional purine biosynthesis protein PurH"/>
    <property type="match status" value="1"/>
</dbReference>
<dbReference type="Gene3D" id="3.40.140.20">
    <property type="match status" value="2"/>
</dbReference>
<dbReference type="Gene3D" id="3.40.50.1380">
    <property type="entry name" value="Methylglyoxal synthase-like domain"/>
    <property type="match status" value="1"/>
</dbReference>
<dbReference type="HAMAP" id="MF_00139">
    <property type="entry name" value="PurH"/>
    <property type="match status" value="1"/>
</dbReference>
<dbReference type="InterPro" id="IPR024051">
    <property type="entry name" value="AICAR_Tfase_dup_dom_sf"/>
</dbReference>
<dbReference type="InterPro" id="IPR016193">
    <property type="entry name" value="Cytidine_deaminase-like"/>
</dbReference>
<dbReference type="InterPro" id="IPR011607">
    <property type="entry name" value="MGS-like_dom"/>
</dbReference>
<dbReference type="InterPro" id="IPR036914">
    <property type="entry name" value="MGS-like_dom_sf"/>
</dbReference>
<dbReference type="InterPro" id="IPR002695">
    <property type="entry name" value="PurH-like"/>
</dbReference>
<dbReference type="NCBIfam" id="NF002049">
    <property type="entry name" value="PRK00881.1"/>
    <property type="match status" value="1"/>
</dbReference>
<dbReference type="NCBIfam" id="TIGR00355">
    <property type="entry name" value="purH"/>
    <property type="match status" value="1"/>
</dbReference>
<dbReference type="PANTHER" id="PTHR11692:SF0">
    <property type="entry name" value="BIFUNCTIONAL PURINE BIOSYNTHESIS PROTEIN ATIC"/>
    <property type="match status" value="1"/>
</dbReference>
<dbReference type="PANTHER" id="PTHR11692">
    <property type="entry name" value="BIFUNCTIONAL PURINE BIOSYNTHESIS PROTEIN PURH"/>
    <property type="match status" value="1"/>
</dbReference>
<dbReference type="Pfam" id="PF01808">
    <property type="entry name" value="AICARFT_IMPCHas"/>
    <property type="match status" value="1"/>
</dbReference>
<dbReference type="Pfam" id="PF02142">
    <property type="entry name" value="MGS"/>
    <property type="match status" value="1"/>
</dbReference>
<dbReference type="PIRSF" id="PIRSF000414">
    <property type="entry name" value="AICARFT_IMPCHas"/>
    <property type="match status" value="1"/>
</dbReference>
<dbReference type="SMART" id="SM00798">
    <property type="entry name" value="AICARFT_IMPCHas"/>
    <property type="match status" value="1"/>
</dbReference>
<dbReference type="SMART" id="SM00851">
    <property type="entry name" value="MGS"/>
    <property type="match status" value="1"/>
</dbReference>
<dbReference type="SUPFAM" id="SSF53927">
    <property type="entry name" value="Cytidine deaminase-like"/>
    <property type="match status" value="1"/>
</dbReference>
<dbReference type="SUPFAM" id="SSF52335">
    <property type="entry name" value="Methylglyoxal synthase-like"/>
    <property type="match status" value="1"/>
</dbReference>
<dbReference type="PROSITE" id="PS51855">
    <property type="entry name" value="MGS"/>
    <property type="match status" value="1"/>
</dbReference>
<name>PUR9_SHISS</name>